<comment type="function">
    <text evidence="1">Functions as a ribosomal silencing factor. Interacts with ribosomal protein uL14 (rplN), blocking formation of intersubunit bridge B8. Prevents association of the 30S and 50S ribosomal subunits and the formation of functional ribosomes, thus repressing translation.</text>
</comment>
<comment type="subunit">
    <text evidence="1">Interacts with ribosomal protein uL14 (rplN).</text>
</comment>
<comment type="subcellular location">
    <subcellularLocation>
        <location evidence="1">Cytoplasm</location>
    </subcellularLocation>
</comment>
<comment type="similarity">
    <text evidence="1">Belongs to the Iojap/RsfS family.</text>
</comment>
<reference key="1">
    <citation type="journal article" date="2002" name="Proc. Natl. Acad. Sci. U.S.A.">
        <title>Extensive mosaic structure revealed by the complete genome sequence of uropathogenic Escherichia coli.</title>
        <authorList>
            <person name="Welch R.A."/>
            <person name="Burland V."/>
            <person name="Plunkett G. III"/>
            <person name="Redford P."/>
            <person name="Roesch P."/>
            <person name="Rasko D."/>
            <person name="Buckles E.L."/>
            <person name="Liou S.-R."/>
            <person name="Boutin A."/>
            <person name="Hackett J."/>
            <person name="Stroud D."/>
            <person name="Mayhew G.F."/>
            <person name="Rose D.J."/>
            <person name="Zhou S."/>
            <person name="Schwartz D.C."/>
            <person name="Perna N.T."/>
            <person name="Mobley H.L.T."/>
            <person name="Donnenberg M.S."/>
            <person name="Blattner F.R."/>
        </authorList>
    </citation>
    <scope>NUCLEOTIDE SEQUENCE [LARGE SCALE GENOMIC DNA]</scope>
    <source>
        <strain>CFT073 / ATCC 700928 / UPEC</strain>
    </source>
</reference>
<protein>
    <recommendedName>
        <fullName evidence="1">Ribosomal silencing factor RsfS</fullName>
    </recommendedName>
</protein>
<proteinExistence type="inferred from homology"/>
<feature type="chain" id="PRO_0000168675" description="Ribosomal silencing factor RsfS">
    <location>
        <begin position="1"/>
        <end position="105"/>
    </location>
</feature>
<name>IOJAP_ECOL6</name>
<gene>
    <name evidence="1" type="primary">rsfS</name>
    <name type="synonym">ybeB</name>
    <name type="ordered locus">c0728</name>
</gene>
<dbReference type="EMBL" id="AE014075">
    <property type="protein sequence ID" value="AAN79201.1"/>
    <property type="molecule type" value="Genomic_DNA"/>
</dbReference>
<dbReference type="RefSeq" id="WP_001161664.1">
    <property type="nucleotide sequence ID" value="NZ_CP051263.1"/>
</dbReference>
<dbReference type="SMR" id="P0AAT7"/>
<dbReference type="STRING" id="199310.c0728"/>
<dbReference type="GeneID" id="93776845"/>
<dbReference type="KEGG" id="ecc:c0728"/>
<dbReference type="eggNOG" id="COG0799">
    <property type="taxonomic scope" value="Bacteria"/>
</dbReference>
<dbReference type="HOGENOM" id="CLU_092688_6_1_6"/>
<dbReference type="BioCyc" id="ECOL199310:C0728-MONOMER"/>
<dbReference type="Proteomes" id="UP000001410">
    <property type="component" value="Chromosome"/>
</dbReference>
<dbReference type="GO" id="GO:0005737">
    <property type="term" value="C:cytoplasm"/>
    <property type="evidence" value="ECO:0007669"/>
    <property type="project" value="UniProtKB-SubCell"/>
</dbReference>
<dbReference type="GO" id="GO:0043023">
    <property type="term" value="F:ribosomal large subunit binding"/>
    <property type="evidence" value="ECO:0007669"/>
    <property type="project" value="TreeGrafter"/>
</dbReference>
<dbReference type="GO" id="GO:0042256">
    <property type="term" value="P:cytosolic ribosome assembly"/>
    <property type="evidence" value="ECO:0007669"/>
    <property type="project" value="UniProtKB-UniRule"/>
</dbReference>
<dbReference type="GO" id="GO:0090071">
    <property type="term" value="P:negative regulation of ribosome biogenesis"/>
    <property type="evidence" value="ECO:0007669"/>
    <property type="project" value="UniProtKB-UniRule"/>
</dbReference>
<dbReference type="GO" id="GO:0017148">
    <property type="term" value="P:negative regulation of translation"/>
    <property type="evidence" value="ECO:0007669"/>
    <property type="project" value="UniProtKB-UniRule"/>
</dbReference>
<dbReference type="FunFam" id="3.30.460.10:FF:000004">
    <property type="entry name" value="Ribosomal silencing factor RsfS"/>
    <property type="match status" value="1"/>
</dbReference>
<dbReference type="Gene3D" id="3.30.460.10">
    <property type="entry name" value="Beta Polymerase, domain 2"/>
    <property type="match status" value="1"/>
</dbReference>
<dbReference type="HAMAP" id="MF_01477">
    <property type="entry name" value="Iojap_RsfS"/>
    <property type="match status" value="1"/>
</dbReference>
<dbReference type="InterPro" id="IPR004394">
    <property type="entry name" value="Iojap/RsfS/C7orf30"/>
</dbReference>
<dbReference type="InterPro" id="IPR043519">
    <property type="entry name" value="NT_sf"/>
</dbReference>
<dbReference type="NCBIfam" id="TIGR00090">
    <property type="entry name" value="rsfS_iojap_ybeB"/>
    <property type="match status" value="1"/>
</dbReference>
<dbReference type="PANTHER" id="PTHR21043">
    <property type="entry name" value="IOJAP SUPERFAMILY ORTHOLOG"/>
    <property type="match status" value="1"/>
</dbReference>
<dbReference type="PANTHER" id="PTHR21043:SF0">
    <property type="entry name" value="MITOCHONDRIAL ASSEMBLY OF RIBOSOMAL LARGE SUBUNIT PROTEIN 1"/>
    <property type="match status" value="1"/>
</dbReference>
<dbReference type="Pfam" id="PF02410">
    <property type="entry name" value="RsfS"/>
    <property type="match status" value="1"/>
</dbReference>
<dbReference type="SUPFAM" id="SSF81301">
    <property type="entry name" value="Nucleotidyltransferase"/>
    <property type="match status" value="1"/>
</dbReference>
<evidence type="ECO:0000255" key="1">
    <source>
        <dbReference type="HAMAP-Rule" id="MF_01477"/>
    </source>
</evidence>
<keyword id="KW-0963">Cytoplasm</keyword>
<keyword id="KW-1185">Reference proteome</keyword>
<keyword id="KW-0678">Repressor</keyword>
<keyword id="KW-0810">Translation regulation</keyword>
<organism>
    <name type="scientific">Escherichia coli O6:H1 (strain CFT073 / ATCC 700928 / UPEC)</name>
    <dbReference type="NCBI Taxonomy" id="199310"/>
    <lineage>
        <taxon>Bacteria</taxon>
        <taxon>Pseudomonadati</taxon>
        <taxon>Pseudomonadota</taxon>
        <taxon>Gammaproteobacteria</taxon>
        <taxon>Enterobacterales</taxon>
        <taxon>Enterobacteriaceae</taxon>
        <taxon>Escherichia</taxon>
    </lineage>
</organism>
<sequence>MQGKALQDFVIDKIDDLKGQDIIALDVQGKSSITDCMIICTGTSSRHVMSIADHVVQESRAAGLLPLGVEGENSADWIVVDLGDVIVHVMQEESRRLYELEKLWS</sequence>
<accession>P0AAT7</accession>
<accession>P05848</accession>
<accession>P77107</accession>